<protein>
    <recommendedName>
        <fullName evidence="1">DNA-directed RNA polymerase subunit alpha</fullName>
        <shortName evidence="1">RNAP subunit alpha</shortName>
        <ecNumber evidence="1">2.7.7.6</ecNumber>
    </recommendedName>
    <alternativeName>
        <fullName evidence="1">RNA polymerase subunit alpha</fullName>
    </alternativeName>
    <alternativeName>
        <fullName evidence="1">Transcriptase subunit alpha</fullName>
    </alternativeName>
</protein>
<evidence type="ECO:0000255" key="1">
    <source>
        <dbReference type="HAMAP-Rule" id="MF_00059"/>
    </source>
</evidence>
<proteinExistence type="inferred from homology"/>
<dbReference type="EC" id="2.7.7.6" evidence="1"/>
<dbReference type="EMBL" id="EU569565">
    <property type="protein sequence ID" value="ACE74761.1"/>
    <property type="molecule type" value="Genomic_DNA"/>
</dbReference>
<dbReference type="EMBL" id="CP000653">
    <property type="protein sequence ID" value="ABP62383.1"/>
    <property type="molecule type" value="Genomic_DNA"/>
</dbReference>
<dbReference type="RefSeq" id="WP_002919219.1">
    <property type="nucleotide sequence ID" value="NC_009436.1"/>
</dbReference>
<dbReference type="SMR" id="A4WFA3"/>
<dbReference type="STRING" id="399742.Ent638_3726"/>
<dbReference type="GeneID" id="98390417"/>
<dbReference type="KEGG" id="ent:Ent638_3726"/>
<dbReference type="eggNOG" id="COG0202">
    <property type="taxonomic scope" value="Bacteria"/>
</dbReference>
<dbReference type="HOGENOM" id="CLU_053084_0_0_6"/>
<dbReference type="OrthoDB" id="9805706at2"/>
<dbReference type="Proteomes" id="UP000000230">
    <property type="component" value="Chromosome"/>
</dbReference>
<dbReference type="GO" id="GO:0005737">
    <property type="term" value="C:cytoplasm"/>
    <property type="evidence" value="ECO:0007669"/>
    <property type="project" value="UniProtKB-ARBA"/>
</dbReference>
<dbReference type="GO" id="GO:0000428">
    <property type="term" value="C:DNA-directed RNA polymerase complex"/>
    <property type="evidence" value="ECO:0007669"/>
    <property type="project" value="UniProtKB-KW"/>
</dbReference>
<dbReference type="GO" id="GO:0003677">
    <property type="term" value="F:DNA binding"/>
    <property type="evidence" value="ECO:0007669"/>
    <property type="project" value="UniProtKB-UniRule"/>
</dbReference>
<dbReference type="GO" id="GO:0003899">
    <property type="term" value="F:DNA-directed RNA polymerase activity"/>
    <property type="evidence" value="ECO:0007669"/>
    <property type="project" value="UniProtKB-UniRule"/>
</dbReference>
<dbReference type="GO" id="GO:0046983">
    <property type="term" value="F:protein dimerization activity"/>
    <property type="evidence" value="ECO:0007669"/>
    <property type="project" value="InterPro"/>
</dbReference>
<dbReference type="GO" id="GO:0006351">
    <property type="term" value="P:DNA-templated transcription"/>
    <property type="evidence" value="ECO:0007669"/>
    <property type="project" value="UniProtKB-UniRule"/>
</dbReference>
<dbReference type="CDD" id="cd06928">
    <property type="entry name" value="RNAP_alpha_NTD"/>
    <property type="match status" value="1"/>
</dbReference>
<dbReference type="FunFam" id="1.10.150.20:FF:000001">
    <property type="entry name" value="DNA-directed RNA polymerase subunit alpha"/>
    <property type="match status" value="1"/>
</dbReference>
<dbReference type="FunFam" id="2.170.120.12:FF:000001">
    <property type="entry name" value="DNA-directed RNA polymerase subunit alpha"/>
    <property type="match status" value="1"/>
</dbReference>
<dbReference type="Gene3D" id="1.10.150.20">
    <property type="entry name" value="5' to 3' exonuclease, C-terminal subdomain"/>
    <property type="match status" value="1"/>
</dbReference>
<dbReference type="Gene3D" id="2.170.120.12">
    <property type="entry name" value="DNA-directed RNA polymerase, insert domain"/>
    <property type="match status" value="1"/>
</dbReference>
<dbReference type="Gene3D" id="3.30.1360.10">
    <property type="entry name" value="RNA polymerase, RBP11-like subunit"/>
    <property type="match status" value="1"/>
</dbReference>
<dbReference type="HAMAP" id="MF_00059">
    <property type="entry name" value="RNApol_bact_RpoA"/>
    <property type="match status" value="1"/>
</dbReference>
<dbReference type="InterPro" id="IPR011262">
    <property type="entry name" value="DNA-dir_RNA_pol_insert"/>
</dbReference>
<dbReference type="InterPro" id="IPR011263">
    <property type="entry name" value="DNA-dir_RNA_pol_RpoA/D/Rpb3"/>
</dbReference>
<dbReference type="InterPro" id="IPR011773">
    <property type="entry name" value="DNA-dir_RpoA"/>
</dbReference>
<dbReference type="InterPro" id="IPR036603">
    <property type="entry name" value="RBP11-like"/>
</dbReference>
<dbReference type="InterPro" id="IPR011260">
    <property type="entry name" value="RNAP_asu_C"/>
</dbReference>
<dbReference type="InterPro" id="IPR036643">
    <property type="entry name" value="RNApol_insert_sf"/>
</dbReference>
<dbReference type="NCBIfam" id="NF003513">
    <property type="entry name" value="PRK05182.1-2"/>
    <property type="match status" value="1"/>
</dbReference>
<dbReference type="NCBIfam" id="NF003519">
    <property type="entry name" value="PRK05182.2-5"/>
    <property type="match status" value="1"/>
</dbReference>
<dbReference type="NCBIfam" id="TIGR02027">
    <property type="entry name" value="rpoA"/>
    <property type="match status" value="1"/>
</dbReference>
<dbReference type="Pfam" id="PF01000">
    <property type="entry name" value="RNA_pol_A_bac"/>
    <property type="match status" value="1"/>
</dbReference>
<dbReference type="Pfam" id="PF03118">
    <property type="entry name" value="RNA_pol_A_CTD"/>
    <property type="match status" value="1"/>
</dbReference>
<dbReference type="Pfam" id="PF01193">
    <property type="entry name" value="RNA_pol_L"/>
    <property type="match status" value="1"/>
</dbReference>
<dbReference type="SMART" id="SM00662">
    <property type="entry name" value="RPOLD"/>
    <property type="match status" value="1"/>
</dbReference>
<dbReference type="SUPFAM" id="SSF47789">
    <property type="entry name" value="C-terminal domain of RNA polymerase alpha subunit"/>
    <property type="match status" value="1"/>
</dbReference>
<dbReference type="SUPFAM" id="SSF56553">
    <property type="entry name" value="Insert subdomain of RNA polymerase alpha subunit"/>
    <property type="match status" value="1"/>
</dbReference>
<dbReference type="SUPFAM" id="SSF55257">
    <property type="entry name" value="RBP11-like subunits of RNA polymerase"/>
    <property type="match status" value="1"/>
</dbReference>
<sequence>MQGSVTEFLKPRLVDIEQVSSTHAKVTLEPLERGFGHTLGNALRRILLSSMPGCAVTEVEIDGVLHEYSTKEGVQEDILEILLNLKGLAVRVQGKDEVILTLNKSGIGPVTAADITHDGDVEIVKPQHVICHLTDENAAISMRIKVQRGRGYVPASARIHSEEDERPIGRLLVDACYSPVERIAYNVEAARVEQRTDLDKLVIEMETNGTIDPEEAIRRAATILAEQLEAFVDLRDVRQPEVKEEKPEFDPILLRPVDDLELTVRSANCLKAEAIHYIGDLVQRTEVELLKTPNLGKKSLTEIKDVLASRGLSLGMRLENWPPASIADE</sequence>
<reference key="1">
    <citation type="journal article" date="2009" name="Int. J. Food Microbiol.">
        <title>Phylogeny and prediction of genetic similarity of Cronobacter and related taxa by multilocus sequence analysis (MLSA).</title>
        <authorList>
            <person name="Kuhnert P."/>
            <person name="Korczak B.M."/>
            <person name="Stephan R."/>
            <person name="Joosten H."/>
            <person name="Iversen C."/>
        </authorList>
    </citation>
    <scope>NUCLEOTIDE SEQUENCE [GENOMIC DNA]</scope>
    <source>
        <strain>638</strain>
    </source>
</reference>
<reference key="2">
    <citation type="journal article" date="2010" name="PLoS Genet.">
        <title>Genome sequence of the plant growth promoting endophytic bacterium Enterobacter sp. 638.</title>
        <authorList>
            <person name="Taghavi S."/>
            <person name="van der Lelie D."/>
            <person name="Hoffman A."/>
            <person name="Zhang Y.B."/>
            <person name="Walla M.D."/>
            <person name="Vangronsveld J."/>
            <person name="Newman L."/>
            <person name="Monchy S."/>
        </authorList>
    </citation>
    <scope>NUCLEOTIDE SEQUENCE [LARGE SCALE GENOMIC DNA]</scope>
    <source>
        <strain>638</strain>
    </source>
</reference>
<comment type="function">
    <text evidence="1">DNA-dependent RNA polymerase catalyzes the transcription of DNA into RNA using the four ribonucleoside triphosphates as substrates.</text>
</comment>
<comment type="catalytic activity">
    <reaction evidence="1">
        <text>RNA(n) + a ribonucleoside 5'-triphosphate = RNA(n+1) + diphosphate</text>
        <dbReference type="Rhea" id="RHEA:21248"/>
        <dbReference type="Rhea" id="RHEA-COMP:14527"/>
        <dbReference type="Rhea" id="RHEA-COMP:17342"/>
        <dbReference type="ChEBI" id="CHEBI:33019"/>
        <dbReference type="ChEBI" id="CHEBI:61557"/>
        <dbReference type="ChEBI" id="CHEBI:140395"/>
        <dbReference type="EC" id="2.7.7.6"/>
    </reaction>
</comment>
<comment type="subunit">
    <text evidence="1">Homodimer. The RNAP catalytic core consists of 2 alpha, 1 beta, 1 beta' and 1 omega subunit. When a sigma factor is associated with the core the holoenzyme is formed, which can initiate transcription.</text>
</comment>
<comment type="domain">
    <text evidence="1">The N-terminal domain is essential for RNAP assembly and basal transcription, whereas the C-terminal domain is involved in interaction with transcriptional regulators and with upstream promoter elements.</text>
</comment>
<comment type="similarity">
    <text evidence="1">Belongs to the RNA polymerase alpha chain family.</text>
</comment>
<gene>
    <name evidence="1" type="primary">rpoA</name>
    <name type="ordered locus">Ent638_3726</name>
</gene>
<name>RPOA_ENT38</name>
<organism>
    <name type="scientific">Enterobacter sp. (strain 638)</name>
    <dbReference type="NCBI Taxonomy" id="399742"/>
    <lineage>
        <taxon>Bacteria</taxon>
        <taxon>Pseudomonadati</taxon>
        <taxon>Pseudomonadota</taxon>
        <taxon>Gammaproteobacteria</taxon>
        <taxon>Enterobacterales</taxon>
        <taxon>Enterobacteriaceae</taxon>
        <taxon>Enterobacter</taxon>
    </lineage>
</organism>
<accession>A4WFA3</accession>
<accession>C1IGI6</accession>
<keyword id="KW-0240">DNA-directed RNA polymerase</keyword>
<keyword id="KW-0548">Nucleotidyltransferase</keyword>
<keyword id="KW-0804">Transcription</keyword>
<keyword id="KW-0808">Transferase</keyword>
<feature type="chain" id="PRO_0000323629" description="DNA-directed RNA polymerase subunit alpha">
    <location>
        <begin position="1"/>
        <end position="329"/>
    </location>
</feature>
<feature type="region of interest" description="Alpha N-terminal domain (alpha-NTD)" evidence="1">
    <location>
        <begin position="1"/>
        <end position="235"/>
    </location>
</feature>
<feature type="region of interest" description="Alpha C-terminal domain (alpha-CTD)" evidence="1">
    <location>
        <begin position="249"/>
        <end position="329"/>
    </location>
</feature>